<name>CCSA_PROM0</name>
<proteinExistence type="inferred from homology"/>
<protein>
    <recommendedName>
        <fullName evidence="2">Cytochrome c biogenesis protein CcsA</fullName>
    </recommendedName>
</protein>
<accession>A3PCH3</accession>
<evidence type="ECO:0000250" key="1"/>
<evidence type="ECO:0000255" key="2">
    <source>
        <dbReference type="HAMAP-Rule" id="MF_01391"/>
    </source>
</evidence>
<organism>
    <name type="scientific">Prochlorococcus marinus (strain MIT 9301)</name>
    <dbReference type="NCBI Taxonomy" id="167546"/>
    <lineage>
        <taxon>Bacteria</taxon>
        <taxon>Bacillati</taxon>
        <taxon>Cyanobacteriota</taxon>
        <taxon>Cyanophyceae</taxon>
        <taxon>Synechococcales</taxon>
        <taxon>Prochlorococcaceae</taxon>
        <taxon>Prochlorococcus</taxon>
    </lineage>
</organism>
<comment type="function">
    <text evidence="2">Required during biogenesis of c-type cytochromes (cytochrome c6 and cytochrome f) at the step of heme attachment.</text>
</comment>
<comment type="subunit">
    <text evidence="1">May interact with ccs1.</text>
</comment>
<comment type="subcellular location">
    <subcellularLocation>
        <location evidence="2">Cellular thylakoid membrane</location>
        <topology evidence="2">Multi-pass membrane protein</topology>
    </subcellularLocation>
</comment>
<comment type="similarity">
    <text evidence="2">Belongs to the CcmF/CycK/Ccl1/NrfE/CcsA family.</text>
</comment>
<gene>
    <name evidence="2" type="primary">ccsA</name>
    <name type="ordered locus">P9301_08251</name>
</gene>
<sequence length="309" mass="34672">MILDNFFKNLIYEPVSVLGLLVFYFLLINLPISLGAVFKKKSSFAVRLITILVNLLITLQLLFRWSISGHFPISNLYESLYFLAWGITLGQLLVEREYQAPIIPSIAIPIELLIVSFACFVLPEDLKSSSNLVPALRSSWLVMHVSVVMLSYAALIIGSLLSMSVLFINKNKPLQIRSSSTGIGGFKLSNSYPVNDLVESIEFSHSEELDTLSYRSILIGFVLLTLGLISGAVWANEAWGTWWSWDPKETWAFISWLFYAAYLHMRISKGWQGRKPALLASTGFLVVLVCYLGVNFLGIGLHSYGWIFG</sequence>
<dbReference type="EMBL" id="CP000576">
    <property type="protein sequence ID" value="ABO17448.1"/>
    <property type="molecule type" value="Genomic_DNA"/>
</dbReference>
<dbReference type="SMR" id="A3PCH3"/>
<dbReference type="STRING" id="167546.P9301_08251"/>
<dbReference type="KEGG" id="pmg:P9301_08251"/>
<dbReference type="eggNOG" id="COG0755">
    <property type="taxonomic scope" value="Bacteria"/>
</dbReference>
<dbReference type="HOGENOM" id="CLU_049710_2_4_3"/>
<dbReference type="OrthoDB" id="9814290at2"/>
<dbReference type="Proteomes" id="UP000001430">
    <property type="component" value="Chromosome"/>
</dbReference>
<dbReference type="GO" id="GO:0031676">
    <property type="term" value="C:plasma membrane-derived thylakoid membrane"/>
    <property type="evidence" value="ECO:0007669"/>
    <property type="project" value="UniProtKB-SubCell"/>
</dbReference>
<dbReference type="GO" id="GO:0020037">
    <property type="term" value="F:heme binding"/>
    <property type="evidence" value="ECO:0007669"/>
    <property type="project" value="InterPro"/>
</dbReference>
<dbReference type="GO" id="GO:0017004">
    <property type="term" value="P:cytochrome complex assembly"/>
    <property type="evidence" value="ECO:0007669"/>
    <property type="project" value="UniProtKB-UniRule"/>
</dbReference>
<dbReference type="HAMAP" id="MF_01391">
    <property type="entry name" value="CytC_CcsA"/>
    <property type="match status" value="1"/>
</dbReference>
<dbReference type="InterPro" id="IPR002541">
    <property type="entry name" value="Cyt_c_assembly"/>
</dbReference>
<dbReference type="InterPro" id="IPR017562">
    <property type="entry name" value="Cyt_c_biogenesis_CcsA"/>
</dbReference>
<dbReference type="InterPro" id="IPR045062">
    <property type="entry name" value="Cyt_c_biogenesis_CcsA/CcmC"/>
</dbReference>
<dbReference type="NCBIfam" id="TIGR03144">
    <property type="entry name" value="cytochr_II_ccsB"/>
    <property type="match status" value="1"/>
</dbReference>
<dbReference type="PANTHER" id="PTHR30071:SF1">
    <property type="entry name" value="CYTOCHROME B_B6 PROTEIN-RELATED"/>
    <property type="match status" value="1"/>
</dbReference>
<dbReference type="PANTHER" id="PTHR30071">
    <property type="entry name" value="HEME EXPORTER PROTEIN C"/>
    <property type="match status" value="1"/>
</dbReference>
<dbReference type="Pfam" id="PF01578">
    <property type="entry name" value="Cytochrom_C_asm"/>
    <property type="match status" value="1"/>
</dbReference>
<keyword id="KW-0201">Cytochrome c-type biogenesis</keyword>
<keyword id="KW-0472">Membrane</keyword>
<keyword id="KW-1185">Reference proteome</keyword>
<keyword id="KW-0793">Thylakoid</keyword>
<keyword id="KW-0812">Transmembrane</keyword>
<keyword id="KW-1133">Transmembrane helix</keyword>
<reference key="1">
    <citation type="journal article" date="2007" name="PLoS Genet.">
        <title>Patterns and implications of gene gain and loss in the evolution of Prochlorococcus.</title>
        <authorList>
            <person name="Kettler G.C."/>
            <person name="Martiny A.C."/>
            <person name="Huang K."/>
            <person name="Zucker J."/>
            <person name="Coleman M.L."/>
            <person name="Rodrigue S."/>
            <person name="Chen F."/>
            <person name="Lapidus A."/>
            <person name="Ferriera S."/>
            <person name="Johnson J."/>
            <person name="Steglich C."/>
            <person name="Church G.M."/>
            <person name="Richardson P."/>
            <person name="Chisholm S.W."/>
        </authorList>
    </citation>
    <scope>NUCLEOTIDE SEQUENCE [LARGE SCALE GENOMIC DNA]</scope>
    <source>
        <strain>MIT 9301</strain>
    </source>
</reference>
<feature type="chain" id="PRO_0000353707" description="Cytochrome c biogenesis protein CcsA">
    <location>
        <begin position="1"/>
        <end position="309"/>
    </location>
</feature>
<feature type="transmembrane region" description="Helical" evidence="2">
    <location>
        <begin position="18"/>
        <end position="38"/>
    </location>
</feature>
<feature type="transmembrane region" description="Helical" evidence="2">
    <location>
        <begin position="43"/>
        <end position="63"/>
    </location>
</feature>
<feature type="transmembrane region" description="Helical" evidence="2">
    <location>
        <begin position="73"/>
        <end position="93"/>
    </location>
</feature>
<feature type="transmembrane region" description="Helical" evidence="2">
    <location>
        <begin position="102"/>
        <end position="122"/>
    </location>
</feature>
<feature type="transmembrane region" description="Helical" evidence="2">
    <location>
        <begin position="148"/>
        <end position="168"/>
    </location>
</feature>
<feature type="transmembrane region" description="Helical" evidence="2">
    <location>
        <begin position="216"/>
        <end position="236"/>
    </location>
</feature>
<feature type="transmembrane region" description="Helical" evidence="2">
    <location>
        <begin position="250"/>
        <end position="267"/>
    </location>
</feature>
<feature type="transmembrane region" description="Helical" evidence="2">
    <location>
        <begin position="279"/>
        <end position="299"/>
    </location>
</feature>